<name>PANC_LEGPC</name>
<dbReference type="EC" id="6.3.2.1" evidence="1"/>
<dbReference type="EMBL" id="CP000675">
    <property type="protein sequence ID" value="ABQ54464.1"/>
    <property type="molecule type" value="Genomic_DNA"/>
</dbReference>
<dbReference type="RefSeq" id="WP_011947575.1">
    <property type="nucleotide sequence ID" value="NZ_JAPMSS010000010.1"/>
</dbReference>
<dbReference type="SMR" id="A5IAR4"/>
<dbReference type="KEGG" id="lpc:LPC_0477"/>
<dbReference type="HOGENOM" id="CLU_047148_0_0_6"/>
<dbReference type="UniPathway" id="UPA00028">
    <property type="reaction ID" value="UER00005"/>
</dbReference>
<dbReference type="GO" id="GO:0005829">
    <property type="term" value="C:cytosol"/>
    <property type="evidence" value="ECO:0007669"/>
    <property type="project" value="TreeGrafter"/>
</dbReference>
<dbReference type="GO" id="GO:0005524">
    <property type="term" value="F:ATP binding"/>
    <property type="evidence" value="ECO:0007669"/>
    <property type="project" value="UniProtKB-KW"/>
</dbReference>
<dbReference type="GO" id="GO:0004592">
    <property type="term" value="F:pantoate-beta-alanine ligase activity"/>
    <property type="evidence" value="ECO:0007669"/>
    <property type="project" value="UniProtKB-UniRule"/>
</dbReference>
<dbReference type="GO" id="GO:0015940">
    <property type="term" value="P:pantothenate biosynthetic process"/>
    <property type="evidence" value="ECO:0007669"/>
    <property type="project" value="UniProtKB-UniRule"/>
</dbReference>
<dbReference type="Gene3D" id="3.40.50.620">
    <property type="entry name" value="HUPs"/>
    <property type="match status" value="1"/>
</dbReference>
<dbReference type="Gene3D" id="3.30.1300.10">
    <property type="entry name" value="Pantoate-beta-alanine ligase, C-terminal domain"/>
    <property type="match status" value="1"/>
</dbReference>
<dbReference type="HAMAP" id="MF_00158">
    <property type="entry name" value="PanC"/>
    <property type="match status" value="1"/>
</dbReference>
<dbReference type="InterPro" id="IPR003721">
    <property type="entry name" value="Pantoate_ligase"/>
</dbReference>
<dbReference type="InterPro" id="IPR042176">
    <property type="entry name" value="Pantoate_ligase_C"/>
</dbReference>
<dbReference type="InterPro" id="IPR014729">
    <property type="entry name" value="Rossmann-like_a/b/a_fold"/>
</dbReference>
<dbReference type="NCBIfam" id="TIGR00018">
    <property type="entry name" value="panC"/>
    <property type="match status" value="1"/>
</dbReference>
<dbReference type="PANTHER" id="PTHR21299">
    <property type="entry name" value="CYTIDYLATE KINASE/PANTOATE-BETA-ALANINE LIGASE"/>
    <property type="match status" value="1"/>
</dbReference>
<dbReference type="PANTHER" id="PTHR21299:SF1">
    <property type="entry name" value="PANTOATE--BETA-ALANINE LIGASE"/>
    <property type="match status" value="1"/>
</dbReference>
<dbReference type="Pfam" id="PF02569">
    <property type="entry name" value="Pantoate_ligase"/>
    <property type="match status" value="1"/>
</dbReference>
<dbReference type="SUPFAM" id="SSF52374">
    <property type="entry name" value="Nucleotidylyl transferase"/>
    <property type="match status" value="1"/>
</dbReference>
<gene>
    <name evidence="1" type="primary">panC</name>
    <name type="ordered locus">LPC_0477</name>
</gene>
<reference key="1">
    <citation type="submission" date="2006-11" db="EMBL/GenBank/DDBJ databases">
        <title>Identification and characterization of a new conjugation/ type IVA secretion system (trb/tra) of L. pneumophila Corby localized on a mobile genomic island.</title>
        <authorList>
            <person name="Gloeckner G."/>
            <person name="Albert-Weissenberger C."/>
            <person name="Weinmann E."/>
            <person name="Jacobi S."/>
            <person name="Schunder E."/>
            <person name="Steinert M."/>
            <person name="Buchrieser C."/>
            <person name="Hacker J."/>
            <person name="Heuner K."/>
        </authorList>
    </citation>
    <scope>NUCLEOTIDE SEQUENCE [LARGE SCALE GENOMIC DNA]</scope>
    <source>
        <strain>Corby</strain>
    </source>
</reference>
<organism>
    <name type="scientific">Legionella pneumophila (strain Corby)</name>
    <dbReference type="NCBI Taxonomy" id="400673"/>
    <lineage>
        <taxon>Bacteria</taxon>
        <taxon>Pseudomonadati</taxon>
        <taxon>Pseudomonadota</taxon>
        <taxon>Gammaproteobacteria</taxon>
        <taxon>Legionellales</taxon>
        <taxon>Legionellaceae</taxon>
        <taxon>Legionella</taxon>
    </lineage>
</organism>
<comment type="function">
    <text evidence="1">Catalyzes the condensation of pantoate with beta-alanine in an ATP-dependent reaction via a pantoyl-adenylate intermediate.</text>
</comment>
<comment type="catalytic activity">
    <reaction evidence="1">
        <text>(R)-pantoate + beta-alanine + ATP = (R)-pantothenate + AMP + diphosphate + H(+)</text>
        <dbReference type="Rhea" id="RHEA:10912"/>
        <dbReference type="ChEBI" id="CHEBI:15378"/>
        <dbReference type="ChEBI" id="CHEBI:15980"/>
        <dbReference type="ChEBI" id="CHEBI:29032"/>
        <dbReference type="ChEBI" id="CHEBI:30616"/>
        <dbReference type="ChEBI" id="CHEBI:33019"/>
        <dbReference type="ChEBI" id="CHEBI:57966"/>
        <dbReference type="ChEBI" id="CHEBI:456215"/>
        <dbReference type="EC" id="6.3.2.1"/>
    </reaction>
</comment>
<comment type="pathway">
    <text evidence="1">Cofactor biosynthesis; (R)-pantothenate biosynthesis; (R)-pantothenate from (R)-pantoate and beta-alanine: step 1/1.</text>
</comment>
<comment type="subunit">
    <text evidence="1">Homodimer.</text>
</comment>
<comment type="subcellular location">
    <subcellularLocation>
        <location evidence="1">Cytoplasm</location>
    </subcellularLocation>
</comment>
<comment type="miscellaneous">
    <text evidence="1">The reaction proceeds by a bi uni uni bi ping pong mechanism.</text>
</comment>
<comment type="similarity">
    <text evidence="1">Belongs to the pantothenate synthetase family.</text>
</comment>
<accession>A5IAR4</accession>
<protein>
    <recommendedName>
        <fullName evidence="1">Pantothenate synthetase</fullName>
        <shortName evidence="1">PS</shortName>
        <ecNumber evidence="1">6.3.2.1</ecNumber>
    </recommendedName>
    <alternativeName>
        <fullName evidence="1">Pantoate--beta-alanine ligase</fullName>
    </alternativeName>
    <alternativeName>
        <fullName evidence="1">Pantoate-activating enzyme</fullName>
    </alternativeName>
</protein>
<evidence type="ECO:0000255" key="1">
    <source>
        <dbReference type="HAMAP-Rule" id="MF_00158"/>
    </source>
</evidence>
<keyword id="KW-0067">ATP-binding</keyword>
<keyword id="KW-0963">Cytoplasm</keyword>
<keyword id="KW-0436">Ligase</keyword>
<keyword id="KW-0547">Nucleotide-binding</keyword>
<keyword id="KW-0566">Pantothenate biosynthesis</keyword>
<feature type="chain" id="PRO_1000011431" description="Pantothenate synthetase">
    <location>
        <begin position="1"/>
        <end position="252"/>
    </location>
</feature>
<feature type="active site" description="Proton donor" evidence="1">
    <location>
        <position position="36"/>
    </location>
</feature>
<feature type="binding site" evidence="1">
    <location>
        <begin position="29"/>
        <end position="36"/>
    </location>
    <ligand>
        <name>ATP</name>
        <dbReference type="ChEBI" id="CHEBI:30616"/>
    </ligand>
</feature>
<feature type="binding site" evidence="1">
    <location>
        <position position="60"/>
    </location>
    <ligand>
        <name>(R)-pantoate</name>
        <dbReference type="ChEBI" id="CHEBI:15980"/>
    </ligand>
</feature>
<feature type="binding site" evidence="1">
    <location>
        <position position="60"/>
    </location>
    <ligand>
        <name>beta-alanine</name>
        <dbReference type="ChEBI" id="CHEBI:57966"/>
    </ligand>
</feature>
<feature type="binding site" evidence="1">
    <location>
        <begin position="146"/>
        <end position="149"/>
    </location>
    <ligand>
        <name>ATP</name>
        <dbReference type="ChEBI" id="CHEBI:30616"/>
    </ligand>
</feature>
<feature type="binding site" evidence="1">
    <location>
        <position position="152"/>
    </location>
    <ligand>
        <name>(R)-pantoate</name>
        <dbReference type="ChEBI" id="CHEBI:15980"/>
    </ligand>
</feature>
<feature type="binding site" evidence="1">
    <location>
        <position position="175"/>
    </location>
    <ligand>
        <name>ATP</name>
        <dbReference type="ChEBI" id="CHEBI:30616"/>
    </ligand>
</feature>
<feature type="binding site" evidence="1">
    <location>
        <begin position="183"/>
        <end position="186"/>
    </location>
    <ligand>
        <name>ATP</name>
        <dbReference type="ChEBI" id="CHEBI:30616"/>
    </ligand>
</feature>
<sequence length="252" mass="28832">MQIFHNLNEWIRFRNTLSPDLSLGFAPTMGNLHAGHASLFLASSKENHYTVSSLFVNPTQFNNPDDYKHYPRTVDADLELMTQNGVDFCILPNENEIYTDGYAYQVQENRLGQLMEGKHRPGHFNGVLTIVMKLFNLVKPTRAYFGEKDYQQLLLIQGMVKALFMDIEIKSCPTVREKSGLACSSRNNRLTPSQREIADEFAKIFHQNKSSAMISKELEALGITVEYIEEFQGRRFAAVKIGDIRLIDNYLL</sequence>
<proteinExistence type="inferred from homology"/>